<accession>C5FP82</accession>
<sequence length="508" mass="55828">MARPAAGPGGISKFGNDFGLQRWRNTPRYDQTQPLEGSVCGYGLSNPFHESLFSCPAASWPQAKLGRPNTPQEPSKDLKRILSQISPKRIEATIRKLVSFGTRHTLSTQTNATHGIGAARDWIASEFQRYADASDGRLTVKVIGYEQQPDGSRVLFPVRISDVVATLKGSEDPERVYVVSGHYDSRASDPLDYKTDAPGANDDASGVAVSLEIARVMSQRNLPRPKATIVFAAVAGEEQGLLGSNFLAQTYRNSSTNVEGMFTNDIIGSSTADDGTKEPHVIRLFAQGVPPLNVENQAMREKRLMIGGENDTPARQLARFVKETAENKYTDMQVSVIYRLDRYLRGGDHRPFLEAGYPAARFTEPNENYAHQHQNIRIEKDPKTGKDIQYGDLPEFCDFDFISRVGKVNAAALWNLAMSPGMPRNVRVDTSDLSNDSKFTWDPPAGGNAGVGGYEIVWRSTIAPFWTNVMDVGMVQAATIDLSKDNVIFGIRARGKNGERGVAVLPFP</sequence>
<organism>
    <name type="scientific">Arthroderma otae (strain ATCC MYA-4605 / CBS 113480)</name>
    <name type="common">Microsporum canis</name>
    <dbReference type="NCBI Taxonomy" id="554155"/>
    <lineage>
        <taxon>Eukaryota</taxon>
        <taxon>Fungi</taxon>
        <taxon>Dikarya</taxon>
        <taxon>Ascomycota</taxon>
        <taxon>Pezizomycotina</taxon>
        <taxon>Eurotiomycetes</taxon>
        <taxon>Eurotiomycetidae</taxon>
        <taxon>Onygenales</taxon>
        <taxon>Arthrodermataceae</taxon>
        <taxon>Microsporum</taxon>
    </lineage>
</organism>
<gene>
    <name type="ORF">MCYG_04217</name>
</gene>
<dbReference type="EC" id="3.4.-.-"/>
<dbReference type="EMBL" id="DS995704">
    <property type="protein sequence ID" value="EEQ31398.1"/>
    <property type="molecule type" value="Genomic_DNA"/>
</dbReference>
<dbReference type="RefSeq" id="XP_002846480.1">
    <property type="nucleotide sequence ID" value="XM_002846434.1"/>
</dbReference>
<dbReference type="SMR" id="C5FP82"/>
<dbReference type="STRING" id="554155.C5FP82"/>
<dbReference type="GeneID" id="9224550"/>
<dbReference type="VEuPathDB" id="FungiDB:MCYG_04217"/>
<dbReference type="eggNOG" id="KOG2195">
    <property type="taxonomic scope" value="Eukaryota"/>
</dbReference>
<dbReference type="HOGENOM" id="CLU_047420_0_0_1"/>
<dbReference type="OMA" id="NNDMIGN"/>
<dbReference type="OrthoDB" id="10013407at2759"/>
<dbReference type="Proteomes" id="UP000002035">
    <property type="component" value="Unassembled WGS sequence"/>
</dbReference>
<dbReference type="GO" id="GO:0005576">
    <property type="term" value="C:extracellular region"/>
    <property type="evidence" value="ECO:0007669"/>
    <property type="project" value="UniProtKB-SubCell"/>
</dbReference>
<dbReference type="GO" id="GO:0046872">
    <property type="term" value="F:metal ion binding"/>
    <property type="evidence" value="ECO:0007669"/>
    <property type="project" value="UniProtKB-KW"/>
</dbReference>
<dbReference type="GO" id="GO:0008235">
    <property type="term" value="F:metalloexopeptidase activity"/>
    <property type="evidence" value="ECO:0007669"/>
    <property type="project" value="InterPro"/>
</dbReference>
<dbReference type="GO" id="GO:0006508">
    <property type="term" value="P:proteolysis"/>
    <property type="evidence" value="ECO:0007669"/>
    <property type="project" value="UniProtKB-KW"/>
</dbReference>
<dbReference type="CDD" id="cd00063">
    <property type="entry name" value="FN3"/>
    <property type="match status" value="1"/>
</dbReference>
<dbReference type="CDD" id="cd05642">
    <property type="entry name" value="M28_like"/>
    <property type="match status" value="1"/>
</dbReference>
<dbReference type="Gene3D" id="3.40.630.10">
    <property type="entry name" value="Zn peptidases"/>
    <property type="match status" value="1"/>
</dbReference>
<dbReference type="InterPro" id="IPR003961">
    <property type="entry name" value="FN3_dom"/>
</dbReference>
<dbReference type="InterPro" id="IPR036116">
    <property type="entry name" value="FN3_sf"/>
</dbReference>
<dbReference type="InterPro" id="IPR045175">
    <property type="entry name" value="M28_fam"/>
</dbReference>
<dbReference type="InterPro" id="IPR007484">
    <property type="entry name" value="Peptidase_M28"/>
</dbReference>
<dbReference type="PANTHER" id="PTHR12147">
    <property type="entry name" value="METALLOPEPTIDASE M28 FAMILY MEMBER"/>
    <property type="match status" value="1"/>
</dbReference>
<dbReference type="PANTHER" id="PTHR12147:SF26">
    <property type="entry name" value="PEPTIDASE M28 DOMAIN-CONTAINING PROTEIN"/>
    <property type="match status" value="1"/>
</dbReference>
<dbReference type="Pfam" id="PF04389">
    <property type="entry name" value="Peptidase_M28"/>
    <property type="match status" value="1"/>
</dbReference>
<dbReference type="SUPFAM" id="SSF49265">
    <property type="entry name" value="Fibronectin type III"/>
    <property type="match status" value="1"/>
</dbReference>
<dbReference type="SUPFAM" id="SSF53187">
    <property type="entry name" value="Zn-dependent exopeptidases"/>
    <property type="match status" value="1"/>
</dbReference>
<dbReference type="PROSITE" id="PS50853">
    <property type="entry name" value="FN3"/>
    <property type="match status" value="1"/>
</dbReference>
<name>M28P2_ARTOC</name>
<protein>
    <recommendedName>
        <fullName>Probable zinc metalloprotease MCYG_04217</fullName>
        <ecNumber>3.4.-.-</ecNumber>
    </recommendedName>
</protein>
<comment type="cofactor">
    <cofactor evidence="1">
        <name>Zn(2+)</name>
        <dbReference type="ChEBI" id="CHEBI:29105"/>
    </cofactor>
    <text evidence="1">Binds 2 Zn(2+) ions per subunit.</text>
</comment>
<comment type="subcellular location">
    <subcellularLocation>
        <location evidence="4">Secreted</location>
    </subcellularLocation>
</comment>
<comment type="similarity">
    <text evidence="4">Belongs to the peptidase M28 family. M28B subfamily.</text>
</comment>
<evidence type="ECO:0000250" key="1"/>
<evidence type="ECO:0000255" key="2"/>
<evidence type="ECO:0000255" key="3">
    <source>
        <dbReference type="PROSITE-ProRule" id="PRU00316"/>
    </source>
</evidence>
<evidence type="ECO:0000305" key="4"/>
<feature type="signal peptide" evidence="2">
    <location>
        <begin position="1"/>
        <end status="unknown"/>
    </location>
</feature>
<feature type="chain" id="PRO_0000411758" description="Probable zinc metalloprotease MCYG_04217">
    <location>
        <begin status="unknown"/>
        <end position="508"/>
    </location>
</feature>
<feature type="domain" description="Fibronectin type-III" evidence="3">
    <location>
        <begin position="422"/>
        <end position="508"/>
    </location>
</feature>
<feature type="binding site" evidence="1">
    <location>
        <position position="182"/>
    </location>
    <ligand>
        <name>Zn(2+)</name>
        <dbReference type="ChEBI" id="CHEBI:29105"/>
        <label>1</label>
    </ligand>
</feature>
<feature type="binding site" evidence="1">
    <location>
        <position position="202"/>
    </location>
    <ligand>
        <name>Zn(2+)</name>
        <dbReference type="ChEBI" id="CHEBI:29105"/>
        <label>1</label>
    </ligand>
</feature>
<feature type="binding site" evidence="1">
    <location>
        <position position="202"/>
    </location>
    <ligand>
        <name>Zn(2+)</name>
        <dbReference type="ChEBI" id="CHEBI:29105"/>
        <label>2</label>
        <note>catalytic</note>
    </ligand>
</feature>
<feature type="binding site" evidence="1">
    <location>
        <position position="238"/>
    </location>
    <ligand>
        <name>Zn(2+)</name>
        <dbReference type="ChEBI" id="CHEBI:29105"/>
        <label>2</label>
        <note>catalytic</note>
    </ligand>
</feature>
<feature type="binding site" evidence="1">
    <location>
        <position position="265"/>
    </location>
    <ligand>
        <name>Zn(2+)</name>
        <dbReference type="ChEBI" id="CHEBI:29105"/>
        <label>1</label>
    </ligand>
</feature>
<feature type="glycosylation site" description="N-linked (GlcNAc...) asparagine" evidence="2">
    <location>
        <position position="111"/>
    </location>
</feature>
<feature type="glycosylation site" description="N-linked (GlcNAc...) asparagine" evidence="2">
    <location>
        <position position="253"/>
    </location>
</feature>
<feature type="glycosylation site" description="N-linked (GlcNAc...) asparagine" evidence="2">
    <location>
        <position position="435"/>
    </location>
</feature>
<keyword id="KW-0325">Glycoprotein</keyword>
<keyword id="KW-0378">Hydrolase</keyword>
<keyword id="KW-0479">Metal-binding</keyword>
<keyword id="KW-0482">Metalloprotease</keyword>
<keyword id="KW-0645">Protease</keyword>
<keyword id="KW-1185">Reference proteome</keyword>
<keyword id="KW-0964">Secreted</keyword>
<keyword id="KW-0732">Signal</keyword>
<keyword id="KW-0862">Zinc</keyword>
<reference key="1">
    <citation type="journal article" date="2012" name="MBio">
        <title>Comparative genome analysis of Trichophyton rubrum and related dermatophytes reveals candidate genes involved in infection.</title>
        <authorList>
            <person name="Martinez D.A."/>
            <person name="Oliver B.G."/>
            <person name="Graeser Y."/>
            <person name="Goldberg J.M."/>
            <person name="Li W."/>
            <person name="Martinez-Rossi N.M."/>
            <person name="Monod M."/>
            <person name="Shelest E."/>
            <person name="Barton R.C."/>
            <person name="Birch E."/>
            <person name="Brakhage A.A."/>
            <person name="Chen Z."/>
            <person name="Gurr S.J."/>
            <person name="Heiman D."/>
            <person name="Heitman J."/>
            <person name="Kosti I."/>
            <person name="Rossi A."/>
            <person name="Saif S."/>
            <person name="Samalova M."/>
            <person name="Saunders C.W."/>
            <person name="Shea T."/>
            <person name="Summerbell R.C."/>
            <person name="Xu J."/>
            <person name="Young S."/>
            <person name="Zeng Q."/>
            <person name="Birren B.W."/>
            <person name="Cuomo C.A."/>
            <person name="White T.C."/>
        </authorList>
    </citation>
    <scope>NUCLEOTIDE SEQUENCE [LARGE SCALE GENOMIC DNA]</scope>
    <source>
        <strain>ATCC MYA-4605 / CBS 113480</strain>
    </source>
</reference>
<proteinExistence type="inferred from homology"/>